<protein>
    <recommendedName>
        <fullName>Protein crossbronx</fullName>
    </recommendedName>
</protein>
<organism>
    <name type="scientific">Drosophila sechellia</name>
    <name type="common">Fruit fly</name>
    <dbReference type="NCBI Taxonomy" id="7238"/>
    <lineage>
        <taxon>Eukaryota</taxon>
        <taxon>Metazoa</taxon>
        <taxon>Ecdysozoa</taxon>
        <taxon>Arthropoda</taxon>
        <taxon>Hexapoda</taxon>
        <taxon>Insecta</taxon>
        <taxon>Pterygota</taxon>
        <taxon>Neoptera</taxon>
        <taxon>Endopterygota</taxon>
        <taxon>Diptera</taxon>
        <taxon>Brachycera</taxon>
        <taxon>Muscomorpha</taxon>
        <taxon>Ephydroidea</taxon>
        <taxon>Drosophilidae</taxon>
        <taxon>Drosophila</taxon>
        <taxon>Sophophora</taxon>
    </lineage>
</organism>
<dbReference type="EMBL" id="CH480816">
    <property type="protein sequence ID" value="EDW47167.1"/>
    <property type="molecule type" value="Genomic_DNA"/>
</dbReference>
<dbReference type="SMR" id="B4HT57"/>
<dbReference type="STRING" id="7238.B4HT57"/>
<dbReference type="EnsemblMetazoa" id="FBtr0203557">
    <property type="protein sequence ID" value="FBpp0202049"/>
    <property type="gene ID" value="FBgn0175454"/>
</dbReference>
<dbReference type="EnsemblMetazoa" id="XM_002033118.2">
    <property type="protein sequence ID" value="XP_002033154.1"/>
    <property type="gene ID" value="LOC6608420"/>
</dbReference>
<dbReference type="EnsemblMetazoa" id="XM_032715618.1">
    <property type="protein sequence ID" value="XP_032571509.1"/>
    <property type="gene ID" value="LOC6608420"/>
</dbReference>
<dbReference type="GeneID" id="6608420"/>
<dbReference type="KEGG" id="dse:6608420"/>
<dbReference type="CTD" id="47272"/>
<dbReference type="HOGENOM" id="CLU_083049_1_0_1"/>
<dbReference type="OMA" id="WGFPEWR"/>
<dbReference type="PhylomeDB" id="B4HT57"/>
<dbReference type="ChiTaRS" id="Ubx">
    <property type="organism name" value="fly"/>
</dbReference>
<dbReference type="Proteomes" id="UP000001292">
    <property type="component" value="Unassembled WGS sequence"/>
</dbReference>
<dbReference type="GO" id="GO:0042742">
    <property type="term" value="P:defense response to bacterium"/>
    <property type="evidence" value="ECO:0007669"/>
    <property type="project" value="EnsemblMetazoa"/>
</dbReference>
<dbReference type="GO" id="GO:0007291">
    <property type="term" value="P:sperm individualization"/>
    <property type="evidence" value="ECO:0007669"/>
    <property type="project" value="EnsemblMetazoa"/>
</dbReference>
<dbReference type="CDD" id="cd23814">
    <property type="entry name" value="UEV_AKTIP"/>
    <property type="match status" value="1"/>
</dbReference>
<dbReference type="FunFam" id="3.10.110.10:FF:000121">
    <property type="entry name" value="Protein crossbronx"/>
    <property type="match status" value="1"/>
</dbReference>
<dbReference type="Gene3D" id="3.10.110.10">
    <property type="entry name" value="Ubiquitin Conjugating Enzyme"/>
    <property type="match status" value="1"/>
</dbReference>
<dbReference type="InterPro" id="IPR050113">
    <property type="entry name" value="Ub_conjugating_enzyme"/>
</dbReference>
<dbReference type="InterPro" id="IPR000608">
    <property type="entry name" value="UBQ-conjugat_E2_core"/>
</dbReference>
<dbReference type="InterPro" id="IPR016135">
    <property type="entry name" value="UBQ-conjugating_enzyme/RWD"/>
</dbReference>
<dbReference type="PANTHER" id="PTHR24067">
    <property type="entry name" value="UBIQUITIN-CONJUGATING ENZYME E2"/>
    <property type="match status" value="1"/>
</dbReference>
<dbReference type="Pfam" id="PF00179">
    <property type="entry name" value="UQ_con"/>
    <property type="match status" value="1"/>
</dbReference>
<dbReference type="SMART" id="SM00212">
    <property type="entry name" value="UBCc"/>
    <property type="match status" value="1"/>
</dbReference>
<dbReference type="SUPFAM" id="SSF54495">
    <property type="entry name" value="UBC-like"/>
    <property type="match status" value="1"/>
</dbReference>
<dbReference type="PROSITE" id="PS50127">
    <property type="entry name" value="UBC_2"/>
    <property type="match status" value="1"/>
</dbReference>
<reference key="1">
    <citation type="journal article" date="2007" name="Nature">
        <title>Evolution of genes and genomes on the Drosophila phylogeny.</title>
        <authorList>
            <consortium name="Drosophila 12 genomes consortium"/>
        </authorList>
    </citation>
    <scope>NUCLEOTIDE SEQUENCE [LARGE SCALE GENOMIC DNA]</scope>
    <source>
        <strain>Rob3c / Tucson 14021-0248.25</strain>
    </source>
</reference>
<comment type="similarity">
    <text evidence="1">Belongs to the ubiquitin-conjugating enzyme family. FTS subfamily.</text>
</comment>
<comment type="caution">
    <text evidence="3">Lacks the conserved Cys residue necessary for ubiquitin-conjugating enzyme E2 activity.</text>
</comment>
<proteinExistence type="inferred from homology"/>
<keyword id="KW-1185">Reference proteome</keyword>
<name>AKTP1_DROSE</name>
<accession>B4HT57</accession>
<evidence type="ECO:0000255" key="1">
    <source>
        <dbReference type="PROSITE-ProRule" id="PRU00388"/>
    </source>
</evidence>
<evidence type="ECO:0000256" key="2">
    <source>
        <dbReference type="SAM" id="MobiDB-lite"/>
    </source>
</evidence>
<evidence type="ECO:0000305" key="3"/>
<feature type="chain" id="PRO_0000379036" description="Protein crossbronx">
    <location>
        <begin position="1"/>
        <end position="244"/>
    </location>
</feature>
<feature type="domain" description="UBC core" evidence="1">
    <location>
        <begin position="20"/>
        <end position="176"/>
    </location>
</feature>
<feature type="region of interest" description="Disordered" evidence="2">
    <location>
        <begin position="209"/>
        <end position="244"/>
    </location>
</feature>
<gene>
    <name type="primary">cbx</name>
    <name type="ORF">GM20572</name>
</gene>
<sequence length="244" mass="28180">MTLDLDAHKKDDKLLITTIQQEYKILAEYKMIESEKLSGIYVIPSYANSLQWFGVFFGRQGLYAESVFRFTILLPDRFPDDKSLPTIIFQQDVIHPHVCPYTHSLDVSHAFPEWRCGEDHLWQLLKYLQVIFSDPLDSIRGIEVDKLKNREAAELLMNNKEEYVARVQENIKESKEHIFDTPPTEDPNYIVFEKFQQDVHGPVLDRIKAGRSKQTEPSAQQGNGGHATGLSWVKEGEFKPLSIE</sequence>